<sequence>MSDDLFSKALENPDQDLNVELPKDDVDLGLLGDGGNERKTDEPAADAERSTGLGSGSSESESDSGSDSDSDSGSSGSEDDSADQDVEGEDEGGDAIENEDEDEDPSPSGPILSKNEILEETVPELPEDYEISEKTIITPIGVLKSAFENNIIIHATMSGEKRVLKEGSIFCLEDRTLIGMLTEVFGPLQNPFYRIKLPDSKKNLFDELKVRLGEKAFIVTPDAHWIDTFELKRNKGTDASNGYDEELPEEEQEFSDDEKEALFKKMKKQQQQRKKRDNRKLANDSDNVKVKRARQPKANSLPKLVPPLGMSSNAPMQHGYKSRNARENIKRESSATSNRNGSSPVPITQLHQQQFSANNYPFPQQPNGMPYPPYSPFPQPTNFQYPPPPFGQATPAQFSNTVPYGSLPPAYNNMSPPTQQSFMPMAQSQPPLPYGVPPMNQMQNPMYIQPPPQAPPQGNGNFQQVMELHQILLQQQQQQHQYQHQHQQDPRT</sequence>
<name>NAF1_YEAS7</name>
<dbReference type="EMBL" id="EF125227">
    <property type="protein sequence ID" value="ABN58633.1"/>
    <property type="molecule type" value="Genomic_DNA"/>
</dbReference>
<dbReference type="EMBL" id="AAFW02000067">
    <property type="protein sequence ID" value="EDN62692.1"/>
    <property type="molecule type" value="Genomic_DNA"/>
</dbReference>
<dbReference type="SMR" id="A6ZRW0"/>
<dbReference type="HOGENOM" id="CLU_025072_1_0_1"/>
<dbReference type="OrthoDB" id="8326at4893"/>
<dbReference type="Proteomes" id="UP000007060">
    <property type="component" value="Unassembled WGS sequence"/>
</dbReference>
<dbReference type="GO" id="GO:0005634">
    <property type="term" value="C:nucleus"/>
    <property type="evidence" value="ECO:0007669"/>
    <property type="project" value="UniProtKB-SubCell"/>
</dbReference>
<dbReference type="GO" id="GO:0005732">
    <property type="term" value="C:sno(s)RNA-containing ribonucleoprotein complex"/>
    <property type="evidence" value="ECO:0007669"/>
    <property type="project" value="InterPro"/>
</dbReference>
<dbReference type="GO" id="GO:0003723">
    <property type="term" value="F:RNA binding"/>
    <property type="evidence" value="ECO:0007669"/>
    <property type="project" value="UniProtKB-KW"/>
</dbReference>
<dbReference type="GO" id="GO:0000493">
    <property type="term" value="P:box H/ACA snoRNP assembly"/>
    <property type="evidence" value="ECO:0007669"/>
    <property type="project" value="InterPro"/>
</dbReference>
<dbReference type="GO" id="GO:0001522">
    <property type="term" value="P:pseudouridine synthesis"/>
    <property type="evidence" value="ECO:0007669"/>
    <property type="project" value="InterPro"/>
</dbReference>
<dbReference type="GO" id="GO:0006364">
    <property type="term" value="P:rRNA processing"/>
    <property type="evidence" value="ECO:0007669"/>
    <property type="project" value="UniProtKB-KW"/>
</dbReference>
<dbReference type="FunFam" id="2.40.10.230:FF:000002">
    <property type="entry name" value="H/ACA ribonucleoprotein complex non-core subunit NAF1"/>
    <property type="match status" value="1"/>
</dbReference>
<dbReference type="Gene3D" id="2.40.10.230">
    <property type="entry name" value="Probable tRNA pseudouridine synthase domain"/>
    <property type="match status" value="1"/>
</dbReference>
<dbReference type="InterPro" id="IPR038664">
    <property type="entry name" value="Gar1/Naf1_Cbf5-bd_sf"/>
</dbReference>
<dbReference type="InterPro" id="IPR007504">
    <property type="entry name" value="H/ACA_rnp_Gar1/Naf1"/>
</dbReference>
<dbReference type="InterPro" id="IPR040309">
    <property type="entry name" value="Naf1"/>
</dbReference>
<dbReference type="InterPro" id="IPR009000">
    <property type="entry name" value="Transl_B-barrel_sf"/>
</dbReference>
<dbReference type="PANTHER" id="PTHR31633">
    <property type="entry name" value="H/ACA RIBONUCLEOPROTEIN COMPLEX NON-CORE SUBUNIT NAF1"/>
    <property type="match status" value="1"/>
</dbReference>
<dbReference type="PANTHER" id="PTHR31633:SF1">
    <property type="entry name" value="H_ACA RIBONUCLEOPROTEIN COMPLEX NON-CORE SUBUNIT NAF1"/>
    <property type="match status" value="1"/>
</dbReference>
<dbReference type="Pfam" id="PF04410">
    <property type="entry name" value="Gar1"/>
    <property type="match status" value="1"/>
</dbReference>
<dbReference type="SUPFAM" id="SSF50447">
    <property type="entry name" value="Translation proteins"/>
    <property type="match status" value="1"/>
</dbReference>
<proteinExistence type="inferred from homology"/>
<comment type="function">
    <text evidence="1">RNA-binding protein required for the maturation of box H/ACA snoRNPs complex and ribosome biogenesis. During assembly of the H/ACA snoRNPs complex, it associates with the complex and disappears during maturation of the complex and is replaced by GAR1 to yield mature H/ACA snoRNPs complex. Acts as a competitive binder for CBF5 probably required to prevent non-cognate RNAs from being loaded during transport of the particle by inducing a non-productive conformation of CBF5 (By similarity).</text>
</comment>
<comment type="subunit">
    <text evidence="1">During assembly of the complex, component of the small nucleolar ribonucleoprotein particles containing H/ACA-type snoRNAs (H/ACA snoRNPs) which contains CBF5, NAF1, NHP2 and NOP10 proteins (By similarity). Interacts with SHQ1. Interacts directly with CBF5. Interacts with hyperphosphorylated C-terminal domain (CTD) of RNA polymerase II large subunit (RPB1) (By similarity).</text>
</comment>
<comment type="subcellular location">
    <subcellularLocation>
        <location evidence="2">Nucleus</location>
    </subcellularLocation>
    <text evidence="2">Mostly present in the nucleoplasm. Absent from the nucleolus (By similarity).</text>
</comment>
<comment type="domain">
    <text evidence="1">The central region (136-221) reveals a striking structural homology with the core domain of GAR1.</text>
</comment>
<comment type="similarity">
    <text evidence="4">Belongs to the NAF1 family.</text>
</comment>
<reference key="1">
    <citation type="journal article" date="2007" name="Proc. Natl. Acad. Sci. U.S.A.">
        <title>Genome sequencing and comparative analysis of Saccharomyces cerevisiae strain YJM789.</title>
        <authorList>
            <person name="Wei W."/>
            <person name="McCusker J.H."/>
            <person name="Hyman R.W."/>
            <person name="Jones T."/>
            <person name="Ning Y."/>
            <person name="Cao Z."/>
            <person name="Gu Z."/>
            <person name="Bruno D."/>
            <person name="Miranda M."/>
            <person name="Nguyen M."/>
            <person name="Wilhelmy J."/>
            <person name="Komp C."/>
            <person name="Tamse R."/>
            <person name="Wang X."/>
            <person name="Jia P."/>
            <person name="Luedi P."/>
            <person name="Oefner P.J."/>
            <person name="David L."/>
            <person name="Dietrich F.S."/>
            <person name="Li Y."/>
            <person name="Davis R.W."/>
            <person name="Steinmetz L.M."/>
        </authorList>
    </citation>
    <scope>NUCLEOTIDE SEQUENCE [LARGE SCALE GENOMIC DNA]</scope>
    <source>
        <strain>YJM789</strain>
    </source>
</reference>
<reference key="2">
    <citation type="journal article" date="2008" name="Genetics">
        <title>Sequential elimination of major-effect contributors identifies additional quantitative trait loci conditioning high-temperature growth in yeast.</title>
        <authorList>
            <person name="Sinha H."/>
            <person name="David L."/>
            <person name="Pascon R.C."/>
            <person name="Clauder-Muenster S."/>
            <person name="Krishnakumar S."/>
            <person name="Nguyen M."/>
            <person name="Shi G."/>
            <person name="Dean J."/>
            <person name="Davis R.W."/>
            <person name="Oefner P.J."/>
            <person name="McCusker J.H."/>
            <person name="Steinmetz L.M."/>
        </authorList>
    </citation>
    <scope>NUCLEOTIDE SEQUENCE [GENOMIC DNA] OF 371-492</scope>
</reference>
<evidence type="ECO:0000250" key="1"/>
<evidence type="ECO:0000250" key="2">
    <source>
        <dbReference type="UniProtKB" id="P53919"/>
    </source>
</evidence>
<evidence type="ECO:0000256" key="3">
    <source>
        <dbReference type="SAM" id="MobiDB-lite"/>
    </source>
</evidence>
<evidence type="ECO:0000305" key="4"/>
<feature type="chain" id="PRO_0000373820" description="H/ACA ribonucleoprotein complex non-core subunit NAF1">
    <location>
        <begin position="1"/>
        <end position="492"/>
    </location>
</feature>
<feature type="region of interest" description="Disordered" evidence="3">
    <location>
        <begin position="1"/>
        <end position="117"/>
    </location>
</feature>
<feature type="region of interest" description="RNA-binding" evidence="1">
    <location>
        <begin position="172"/>
        <end position="230"/>
    </location>
</feature>
<feature type="region of interest" description="Disordered" evidence="3">
    <location>
        <begin position="237"/>
        <end position="346"/>
    </location>
</feature>
<feature type="region of interest" description="Disordered" evidence="3">
    <location>
        <begin position="424"/>
        <end position="492"/>
    </location>
</feature>
<feature type="compositionally biased region" description="Basic and acidic residues" evidence="3">
    <location>
        <begin position="35"/>
        <end position="49"/>
    </location>
</feature>
<feature type="compositionally biased region" description="Acidic residues" evidence="3">
    <location>
        <begin position="60"/>
        <end position="70"/>
    </location>
</feature>
<feature type="compositionally biased region" description="Acidic residues" evidence="3">
    <location>
        <begin position="77"/>
        <end position="105"/>
    </location>
</feature>
<feature type="compositionally biased region" description="Acidic residues" evidence="3">
    <location>
        <begin position="243"/>
        <end position="259"/>
    </location>
</feature>
<feature type="compositionally biased region" description="Basic residues" evidence="3">
    <location>
        <begin position="264"/>
        <end position="278"/>
    </location>
</feature>
<feature type="compositionally biased region" description="Basic and acidic residues" evidence="3">
    <location>
        <begin position="279"/>
        <end position="289"/>
    </location>
</feature>
<feature type="compositionally biased region" description="Basic and acidic residues" evidence="3">
    <location>
        <begin position="324"/>
        <end position="333"/>
    </location>
</feature>
<feature type="compositionally biased region" description="Polar residues" evidence="3">
    <location>
        <begin position="334"/>
        <end position="346"/>
    </location>
</feature>
<feature type="compositionally biased region" description="Low complexity" evidence="3">
    <location>
        <begin position="456"/>
        <end position="485"/>
    </location>
</feature>
<feature type="modified residue" description="Phosphoserine" evidence="2">
    <location>
        <position position="255"/>
    </location>
</feature>
<protein>
    <recommendedName>
        <fullName>H/ACA ribonucleoprotein complex non-core subunit NAF1</fullName>
    </recommendedName>
    <alternativeName>
        <fullName>Nuclear assembly factor 1</fullName>
    </alternativeName>
</protein>
<accession>A6ZRW0</accession>
<accession>B0KZS1</accession>
<organism>
    <name type="scientific">Saccharomyces cerevisiae (strain YJM789)</name>
    <name type="common">Baker's yeast</name>
    <dbReference type="NCBI Taxonomy" id="307796"/>
    <lineage>
        <taxon>Eukaryota</taxon>
        <taxon>Fungi</taxon>
        <taxon>Dikarya</taxon>
        <taxon>Ascomycota</taxon>
        <taxon>Saccharomycotina</taxon>
        <taxon>Saccharomycetes</taxon>
        <taxon>Saccharomycetales</taxon>
        <taxon>Saccharomycetaceae</taxon>
        <taxon>Saccharomyces</taxon>
    </lineage>
</organism>
<keyword id="KW-0539">Nucleus</keyword>
<keyword id="KW-0597">Phosphoprotein</keyword>
<keyword id="KW-0687">Ribonucleoprotein</keyword>
<keyword id="KW-0690">Ribosome biogenesis</keyword>
<keyword id="KW-0694">RNA-binding</keyword>
<keyword id="KW-0698">rRNA processing</keyword>
<gene>
    <name type="primary">NAF1</name>
    <name type="ORF">SCY_4671</name>
</gene>